<evidence type="ECO:0000250" key="1">
    <source>
        <dbReference type="UniProtKB" id="P42847"/>
    </source>
</evidence>
<evidence type="ECO:0000255" key="2"/>
<evidence type="ECO:0000305" key="3"/>
<sequence length="223" mass="25601">MVLKHSVTYNLSFFISFTFSSIFFSSLILFLVYKSVLSKLFFIKYLMLNLTKVGLRRFWSQSPRRNAPKKELSSLLESTITPKAFSKRTEEPNPIMQGTDTIPMPFYLHAKCLKNNTHITLCSPERKIIFRASGGTCGFRKGKRRGYDAAYTICSKVLEQIQVKRLGIENLHVIFHGFSQAREAVQNCLLGQEGAVIRDKIVKVMDRTPIKFGGPRGRRERRI</sequence>
<dbReference type="EMBL" id="CU329670">
    <property type="protein sequence ID" value="CAB11244.1"/>
    <property type="molecule type" value="Genomic_DNA"/>
</dbReference>
<dbReference type="PIR" id="T38037">
    <property type="entry name" value="T38037"/>
</dbReference>
<dbReference type="RefSeq" id="NP_594803.1">
    <property type="nucleotide sequence ID" value="NM_001020231.2"/>
</dbReference>
<dbReference type="SMR" id="O13882"/>
<dbReference type="ComplexPortal" id="CPX-10315">
    <property type="entry name" value="37S mitochondrial small ribosomal subunit"/>
</dbReference>
<dbReference type="FunCoup" id="O13882">
    <property type="interactions" value="202"/>
</dbReference>
<dbReference type="STRING" id="284812.O13882"/>
<dbReference type="PaxDb" id="4896-SPAC1B3.18c.1"/>
<dbReference type="EnsemblFungi" id="SPAC1B3.18c.1">
    <property type="protein sequence ID" value="SPAC1B3.18c.1:pep"/>
    <property type="gene ID" value="SPAC1B3.18c"/>
</dbReference>
<dbReference type="GeneID" id="2542616"/>
<dbReference type="KEGG" id="spo:2542616"/>
<dbReference type="PomBase" id="SPAC1B3.18c">
    <property type="gene designation" value="mrps18"/>
</dbReference>
<dbReference type="VEuPathDB" id="FungiDB:SPAC1B3.18c"/>
<dbReference type="eggNOG" id="ENOG502S752">
    <property type="taxonomic scope" value="Eukaryota"/>
</dbReference>
<dbReference type="HOGENOM" id="CLU_072439_4_1_1"/>
<dbReference type="InParanoid" id="O13882"/>
<dbReference type="OMA" id="DSAMEFT"/>
<dbReference type="PhylomeDB" id="O13882"/>
<dbReference type="PRO" id="PR:O13882"/>
<dbReference type="Proteomes" id="UP000002485">
    <property type="component" value="Chromosome I"/>
</dbReference>
<dbReference type="GO" id="GO:0005737">
    <property type="term" value="C:cytoplasm"/>
    <property type="evidence" value="ECO:0007005"/>
    <property type="project" value="PomBase"/>
</dbReference>
<dbReference type="GO" id="GO:0005763">
    <property type="term" value="C:mitochondrial small ribosomal subunit"/>
    <property type="evidence" value="ECO:0000318"/>
    <property type="project" value="GO_Central"/>
</dbReference>
<dbReference type="GO" id="GO:0003735">
    <property type="term" value="F:structural constituent of ribosome"/>
    <property type="evidence" value="ECO:0000318"/>
    <property type="project" value="GO_Central"/>
</dbReference>
<dbReference type="GO" id="GO:0032543">
    <property type="term" value="P:mitochondrial translation"/>
    <property type="evidence" value="ECO:0000250"/>
    <property type="project" value="PomBase"/>
</dbReference>
<dbReference type="GO" id="GO:0006412">
    <property type="term" value="P:translation"/>
    <property type="evidence" value="ECO:0000318"/>
    <property type="project" value="GO_Central"/>
</dbReference>
<dbReference type="Gene3D" id="3.30.420.80">
    <property type="entry name" value="Ribosomal protein S11"/>
    <property type="match status" value="1"/>
</dbReference>
<dbReference type="HAMAP" id="MF_01310">
    <property type="entry name" value="Ribosomal_uS11"/>
    <property type="match status" value="1"/>
</dbReference>
<dbReference type="InterPro" id="IPR001971">
    <property type="entry name" value="Ribosomal_uS11"/>
</dbReference>
<dbReference type="InterPro" id="IPR036967">
    <property type="entry name" value="Ribosomal_uS11_sf"/>
</dbReference>
<dbReference type="PANTHER" id="PTHR11759">
    <property type="entry name" value="40S RIBOSOMAL PROTEIN S14/30S RIBOSOMAL PROTEIN S11"/>
    <property type="match status" value="1"/>
</dbReference>
<dbReference type="Pfam" id="PF00411">
    <property type="entry name" value="Ribosomal_S11"/>
    <property type="match status" value="1"/>
</dbReference>
<dbReference type="SUPFAM" id="SSF53137">
    <property type="entry name" value="Translational machinery components"/>
    <property type="match status" value="1"/>
</dbReference>
<reference key="1">
    <citation type="journal article" date="2002" name="Nature">
        <title>The genome sequence of Schizosaccharomyces pombe.</title>
        <authorList>
            <person name="Wood V."/>
            <person name="Gwilliam R."/>
            <person name="Rajandream M.A."/>
            <person name="Lyne M.H."/>
            <person name="Lyne R."/>
            <person name="Stewart A."/>
            <person name="Sgouros J.G."/>
            <person name="Peat N."/>
            <person name="Hayles J."/>
            <person name="Baker S.G."/>
            <person name="Basham D."/>
            <person name="Bowman S."/>
            <person name="Brooks K."/>
            <person name="Brown D."/>
            <person name="Brown S."/>
            <person name="Chillingworth T."/>
            <person name="Churcher C.M."/>
            <person name="Collins M."/>
            <person name="Connor R."/>
            <person name="Cronin A."/>
            <person name="Davis P."/>
            <person name="Feltwell T."/>
            <person name="Fraser A."/>
            <person name="Gentles S."/>
            <person name="Goble A."/>
            <person name="Hamlin N."/>
            <person name="Harris D.E."/>
            <person name="Hidalgo J."/>
            <person name="Hodgson G."/>
            <person name="Holroyd S."/>
            <person name="Hornsby T."/>
            <person name="Howarth S."/>
            <person name="Huckle E.J."/>
            <person name="Hunt S."/>
            <person name="Jagels K."/>
            <person name="James K.D."/>
            <person name="Jones L."/>
            <person name="Jones M."/>
            <person name="Leather S."/>
            <person name="McDonald S."/>
            <person name="McLean J."/>
            <person name="Mooney P."/>
            <person name="Moule S."/>
            <person name="Mungall K.L."/>
            <person name="Murphy L.D."/>
            <person name="Niblett D."/>
            <person name="Odell C."/>
            <person name="Oliver K."/>
            <person name="O'Neil S."/>
            <person name="Pearson D."/>
            <person name="Quail M.A."/>
            <person name="Rabbinowitsch E."/>
            <person name="Rutherford K.M."/>
            <person name="Rutter S."/>
            <person name="Saunders D."/>
            <person name="Seeger K."/>
            <person name="Sharp S."/>
            <person name="Skelton J."/>
            <person name="Simmonds M.N."/>
            <person name="Squares R."/>
            <person name="Squares S."/>
            <person name="Stevens K."/>
            <person name="Taylor K."/>
            <person name="Taylor R.G."/>
            <person name="Tivey A."/>
            <person name="Walsh S.V."/>
            <person name="Warren T."/>
            <person name="Whitehead S."/>
            <person name="Woodward J.R."/>
            <person name="Volckaert G."/>
            <person name="Aert R."/>
            <person name="Robben J."/>
            <person name="Grymonprez B."/>
            <person name="Weltjens I."/>
            <person name="Vanstreels E."/>
            <person name="Rieger M."/>
            <person name="Schaefer M."/>
            <person name="Mueller-Auer S."/>
            <person name="Gabel C."/>
            <person name="Fuchs M."/>
            <person name="Duesterhoeft A."/>
            <person name="Fritzc C."/>
            <person name="Holzer E."/>
            <person name="Moestl D."/>
            <person name="Hilbert H."/>
            <person name="Borzym K."/>
            <person name="Langer I."/>
            <person name="Beck A."/>
            <person name="Lehrach H."/>
            <person name="Reinhardt R."/>
            <person name="Pohl T.M."/>
            <person name="Eger P."/>
            <person name="Zimmermann W."/>
            <person name="Wedler H."/>
            <person name="Wambutt R."/>
            <person name="Purnelle B."/>
            <person name="Goffeau A."/>
            <person name="Cadieu E."/>
            <person name="Dreano S."/>
            <person name="Gloux S."/>
            <person name="Lelaure V."/>
            <person name="Mottier S."/>
            <person name="Galibert F."/>
            <person name="Aves S.J."/>
            <person name="Xiang Z."/>
            <person name="Hunt C."/>
            <person name="Moore K."/>
            <person name="Hurst S.M."/>
            <person name="Lucas M."/>
            <person name="Rochet M."/>
            <person name="Gaillardin C."/>
            <person name="Tallada V.A."/>
            <person name="Garzon A."/>
            <person name="Thode G."/>
            <person name="Daga R.R."/>
            <person name="Cruzado L."/>
            <person name="Jimenez J."/>
            <person name="Sanchez M."/>
            <person name="del Rey F."/>
            <person name="Benito J."/>
            <person name="Dominguez A."/>
            <person name="Revuelta J.L."/>
            <person name="Moreno S."/>
            <person name="Armstrong J."/>
            <person name="Forsburg S.L."/>
            <person name="Cerutti L."/>
            <person name="Lowe T."/>
            <person name="McCombie W.R."/>
            <person name="Paulsen I."/>
            <person name="Potashkin J."/>
            <person name="Shpakovski G.V."/>
            <person name="Ussery D."/>
            <person name="Barrell B.G."/>
            <person name="Nurse P."/>
        </authorList>
    </citation>
    <scope>NUCLEOTIDE SEQUENCE [LARGE SCALE GENOMIC DNA]</scope>
    <source>
        <strain>972 / ATCC 24843</strain>
    </source>
</reference>
<name>RT18_SCHPO</name>
<protein>
    <recommendedName>
        <fullName evidence="3">Small ribosomal subunit protein uS11m</fullName>
    </recommendedName>
    <alternativeName>
        <fullName>37S ribosomal protein S18, mitochondrial</fullName>
    </alternativeName>
</protein>
<proteinExistence type="inferred from homology"/>
<keyword id="KW-0496">Mitochondrion</keyword>
<keyword id="KW-1185">Reference proteome</keyword>
<keyword id="KW-0687">Ribonucleoprotein</keyword>
<keyword id="KW-0689">Ribosomal protein</keyword>
<keyword id="KW-0809">Transit peptide</keyword>
<feature type="transit peptide" description="Mitochondrion" evidence="2">
    <location>
        <begin position="1"/>
        <end position="38"/>
    </location>
</feature>
<feature type="chain" id="PRO_0000116692" description="Small ribosomal subunit protein uS11m">
    <location>
        <begin position="39"/>
        <end position="223"/>
    </location>
</feature>
<comment type="function">
    <text evidence="1">Component of the mitochondrial ribosome (mitoribosome), a dedicated translation machinery responsible for the synthesis of mitochondrial genome-encoded proteins, including at least some of the essential transmembrane subunits of the mitochondrial respiratory chain. The mitoribosomes are attached to the mitochondrial inner membrane and translation products are cotranslationally integrated into the membrane.</text>
</comment>
<comment type="subunit">
    <text evidence="1">Component of the mitochondrial small ribosomal subunit (mt-SSU). Mature yeast 74S mitochondrial ribosomes consist of a small (37S) and a large (54S) subunit. The 37S small subunit contains a 15S ribosomal RNA (15S mt-rRNA) and at least 32 different proteins. The 54S large subunit contains a 21S rRNA (21S mt-rRNA) and at least 45 different proteins.</text>
</comment>
<comment type="subcellular location">
    <subcellularLocation>
        <location evidence="1">Mitochondrion</location>
    </subcellularLocation>
</comment>
<comment type="similarity">
    <text evidence="3">Belongs to the universal ribosomal protein uS11 family.</text>
</comment>
<organism>
    <name type="scientific">Schizosaccharomyces pombe (strain 972 / ATCC 24843)</name>
    <name type="common">Fission yeast</name>
    <dbReference type="NCBI Taxonomy" id="284812"/>
    <lineage>
        <taxon>Eukaryota</taxon>
        <taxon>Fungi</taxon>
        <taxon>Dikarya</taxon>
        <taxon>Ascomycota</taxon>
        <taxon>Taphrinomycotina</taxon>
        <taxon>Schizosaccharomycetes</taxon>
        <taxon>Schizosaccharomycetales</taxon>
        <taxon>Schizosaccharomycetaceae</taxon>
        <taxon>Schizosaccharomyces</taxon>
    </lineage>
</organism>
<gene>
    <name type="primary">mrps18</name>
    <name type="ORF">SPAC1B3.18c</name>
</gene>
<accession>O13882</accession>